<evidence type="ECO:0000250" key="1"/>
<evidence type="ECO:0000255" key="2">
    <source>
        <dbReference type="PROSITE-ProRule" id="PRU00169"/>
    </source>
</evidence>
<evidence type="ECO:0000255" key="3">
    <source>
        <dbReference type="PROSITE-ProRule" id="PRU01091"/>
    </source>
</evidence>
<accession>Q8CP82</accession>
<name>ARLR_STAES</name>
<proteinExistence type="inferred from homology"/>
<organism>
    <name type="scientific">Staphylococcus epidermidis (strain ATCC 12228 / FDA PCI 1200)</name>
    <dbReference type="NCBI Taxonomy" id="176280"/>
    <lineage>
        <taxon>Bacteria</taxon>
        <taxon>Bacillati</taxon>
        <taxon>Bacillota</taxon>
        <taxon>Bacilli</taxon>
        <taxon>Bacillales</taxon>
        <taxon>Staphylococcaceae</taxon>
        <taxon>Staphylococcus</taxon>
    </lineage>
</organism>
<dbReference type="EMBL" id="AE015929">
    <property type="protein sequence ID" value="AAO04697.1"/>
    <property type="molecule type" value="Genomic_DNA"/>
</dbReference>
<dbReference type="RefSeq" id="NP_764655.1">
    <property type="nucleotide sequence ID" value="NC_004461.1"/>
</dbReference>
<dbReference type="RefSeq" id="WP_001830971.1">
    <property type="nucleotide sequence ID" value="NZ_WBME01000002.1"/>
</dbReference>
<dbReference type="SMR" id="Q8CP82"/>
<dbReference type="KEGG" id="sep:SE_1100"/>
<dbReference type="PATRIC" id="fig|176280.10.peg.1075"/>
<dbReference type="eggNOG" id="COG0745">
    <property type="taxonomic scope" value="Bacteria"/>
</dbReference>
<dbReference type="HOGENOM" id="CLU_000445_30_1_9"/>
<dbReference type="OrthoDB" id="9790442at2"/>
<dbReference type="Proteomes" id="UP000001411">
    <property type="component" value="Chromosome"/>
</dbReference>
<dbReference type="GO" id="GO:0005829">
    <property type="term" value="C:cytosol"/>
    <property type="evidence" value="ECO:0007669"/>
    <property type="project" value="TreeGrafter"/>
</dbReference>
<dbReference type="GO" id="GO:0032993">
    <property type="term" value="C:protein-DNA complex"/>
    <property type="evidence" value="ECO:0007669"/>
    <property type="project" value="TreeGrafter"/>
</dbReference>
<dbReference type="GO" id="GO:0000156">
    <property type="term" value="F:phosphorelay response regulator activity"/>
    <property type="evidence" value="ECO:0007669"/>
    <property type="project" value="TreeGrafter"/>
</dbReference>
<dbReference type="GO" id="GO:0000976">
    <property type="term" value="F:transcription cis-regulatory region binding"/>
    <property type="evidence" value="ECO:0007669"/>
    <property type="project" value="TreeGrafter"/>
</dbReference>
<dbReference type="GO" id="GO:0006355">
    <property type="term" value="P:regulation of DNA-templated transcription"/>
    <property type="evidence" value="ECO:0007669"/>
    <property type="project" value="InterPro"/>
</dbReference>
<dbReference type="CDD" id="cd00383">
    <property type="entry name" value="trans_reg_C"/>
    <property type="match status" value="1"/>
</dbReference>
<dbReference type="FunFam" id="3.40.50.2300:FF:000001">
    <property type="entry name" value="DNA-binding response regulator PhoB"/>
    <property type="match status" value="1"/>
</dbReference>
<dbReference type="FunFam" id="1.10.10.10:FF:000005">
    <property type="entry name" value="Two-component system response regulator"/>
    <property type="match status" value="1"/>
</dbReference>
<dbReference type="Gene3D" id="3.40.50.2300">
    <property type="match status" value="1"/>
</dbReference>
<dbReference type="Gene3D" id="6.10.250.690">
    <property type="match status" value="1"/>
</dbReference>
<dbReference type="Gene3D" id="1.10.10.10">
    <property type="entry name" value="Winged helix-like DNA-binding domain superfamily/Winged helix DNA-binding domain"/>
    <property type="match status" value="1"/>
</dbReference>
<dbReference type="InterPro" id="IPR011006">
    <property type="entry name" value="CheY-like_superfamily"/>
</dbReference>
<dbReference type="InterPro" id="IPR001867">
    <property type="entry name" value="OmpR/PhoB-type_DNA-bd"/>
</dbReference>
<dbReference type="InterPro" id="IPR016032">
    <property type="entry name" value="Sig_transdc_resp-reg_C-effctor"/>
</dbReference>
<dbReference type="InterPro" id="IPR001789">
    <property type="entry name" value="Sig_transdc_resp-reg_receiver"/>
</dbReference>
<dbReference type="InterPro" id="IPR039420">
    <property type="entry name" value="WalR-like"/>
</dbReference>
<dbReference type="InterPro" id="IPR036388">
    <property type="entry name" value="WH-like_DNA-bd_sf"/>
</dbReference>
<dbReference type="PANTHER" id="PTHR48111">
    <property type="entry name" value="REGULATOR OF RPOS"/>
    <property type="match status" value="1"/>
</dbReference>
<dbReference type="PANTHER" id="PTHR48111:SF22">
    <property type="entry name" value="REGULATOR OF RPOS"/>
    <property type="match status" value="1"/>
</dbReference>
<dbReference type="Pfam" id="PF00072">
    <property type="entry name" value="Response_reg"/>
    <property type="match status" value="1"/>
</dbReference>
<dbReference type="Pfam" id="PF00486">
    <property type="entry name" value="Trans_reg_C"/>
    <property type="match status" value="1"/>
</dbReference>
<dbReference type="SMART" id="SM00448">
    <property type="entry name" value="REC"/>
    <property type="match status" value="1"/>
</dbReference>
<dbReference type="SMART" id="SM00862">
    <property type="entry name" value="Trans_reg_C"/>
    <property type="match status" value="1"/>
</dbReference>
<dbReference type="SUPFAM" id="SSF46894">
    <property type="entry name" value="C-terminal effector domain of the bipartite response regulators"/>
    <property type="match status" value="1"/>
</dbReference>
<dbReference type="SUPFAM" id="SSF52172">
    <property type="entry name" value="CheY-like"/>
    <property type="match status" value="1"/>
</dbReference>
<dbReference type="PROSITE" id="PS51755">
    <property type="entry name" value="OMPR_PHOB"/>
    <property type="match status" value="1"/>
</dbReference>
<dbReference type="PROSITE" id="PS50110">
    <property type="entry name" value="RESPONSE_REGULATORY"/>
    <property type="match status" value="1"/>
</dbReference>
<protein>
    <recommendedName>
        <fullName>Response regulator ArlR</fullName>
    </recommendedName>
</protein>
<comment type="function">
    <text evidence="1">Member of the two-component regulatory system ArlS/ArlR.</text>
</comment>
<comment type="subcellular location">
    <subcellularLocation>
        <location evidence="1">Cytoplasm</location>
    </subcellularLocation>
</comment>
<comment type="PTM">
    <text evidence="1">Phosphorylated by ArlS.</text>
</comment>
<feature type="chain" id="PRO_0000293443" description="Response regulator ArlR">
    <location>
        <begin position="1"/>
        <end position="219"/>
    </location>
</feature>
<feature type="domain" description="Response regulatory" evidence="2">
    <location>
        <begin position="3"/>
        <end position="116"/>
    </location>
</feature>
<feature type="DNA-binding region" description="OmpR/PhoB-type" evidence="3">
    <location>
        <begin position="122"/>
        <end position="219"/>
    </location>
</feature>
<feature type="modified residue" description="4-aspartylphosphate" evidence="2">
    <location>
        <position position="52"/>
    </location>
</feature>
<gene>
    <name type="primary">arlR</name>
    <name type="ordered locus">SE_1100</name>
</gene>
<keyword id="KW-0963">Cytoplasm</keyword>
<keyword id="KW-0238">DNA-binding</keyword>
<keyword id="KW-0597">Phosphoprotein</keyword>
<keyword id="KW-0804">Transcription</keyword>
<keyword id="KW-0805">Transcription regulation</keyword>
<keyword id="KW-0902">Two-component regulatory system</keyword>
<sequence length="219" mass="25412">MTNILIVEDEQNLARFIELELTHENYTVDIENDGKVGLDKALSKPYDLYILDLMLPNINGLEICRQIRQKTTTPIIIITAKSETYDKVAGLDYGADDYIVKPFDIEELLARIRAVLRRQPDKDVLDINGIIIDKDAFKVTVNGHQLELTKTEYDLLYVLAENRNHVMQREQILDHVWGYNSEVETNVVDVYIRYLRNKLKPFNKEKSIETVRGVGYVIR</sequence>
<reference key="1">
    <citation type="journal article" date="2003" name="Mol. Microbiol.">
        <title>Genome-based analysis of virulence genes in a non-biofilm-forming Staphylococcus epidermidis strain (ATCC 12228).</title>
        <authorList>
            <person name="Zhang Y.-Q."/>
            <person name="Ren S.-X."/>
            <person name="Li H.-L."/>
            <person name="Wang Y.-X."/>
            <person name="Fu G."/>
            <person name="Yang J."/>
            <person name="Qin Z.-Q."/>
            <person name="Miao Y.-G."/>
            <person name="Wang W.-Y."/>
            <person name="Chen R.-S."/>
            <person name="Shen Y."/>
            <person name="Chen Z."/>
            <person name="Yuan Z.-H."/>
            <person name="Zhao G.-P."/>
            <person name="Qu D."/>
            <person name="Danchin A."/>
            <person name="Wen Y.-M."/>
        </authorList>
    </citation>
    <scope>NUCLEOTIDE SEQUENCE [LARGE SCALE GENOMIC DNA]</scope>
    <source>
        <strain>ATCC 12228 / FDA PCI 1200</strain>
    </source>
</reference>